<name>DNLJ_CLONN</name>
<sequence>MEDKKLLIYELVEELNKLAYEYYVLDNPSVSDKDYDKKYDKLVELEKETGLVLPYSPTQRVGDVVLSKFDKYTHKGKLWSLGKAQSLKEVEDWHNKNVKAVNEYNLTHDDKLPPIKYIITKKFDGLTINCTYNEDGILVTAATRGTGEIGEEITAQAKTIKTIPLKIDNDAVIEVHGEAIMTKEAFEEYNKVAVVPLKNLRNGAAGALRNLNVKETARRNLSAFFYDIGYNEGTPFKTYGEMLKFIKDHGIPMDDYAMECSTIEEIEKEINYIEEIRNKLNYDIDGAVIAVDDMKTRELLGYTVKFPKWALAYKFEAQEATTKLLEVEWNVGRSGRVTPTAILEPVEIGGVTVKRATLNNMDDIERKGVKLGSTVFLRRSNDVIPEIMGVVEESLEGSKDIEAPTTCPYCGSEIVQEGVHYFCENTLSCKPQLVKSIVHFGSREAMNIAGFSEKTAEQLFEELEIKSISDLYRIKKEDLLKLNRFGEKKAQNLIDAIESSKECDLPSFIYALGIPNVGKKTSTDLCKKFKTLDNLKKAKFEELVSVEDIGDIVAQSVLDFFNDETILKSIDELLSLGVTPKFKEEEIKENIFNGKTVVVTGSLSSFSRNEIKEKLQSLGAKVAGSVSKKTDYVLVGKDPGSKYEKALQLNIKIISEEDFKNMIG</sequence>
<reference key="1">
    <citation type="journal article" date="2006" name="Nat. Biotechnol.">
        <title>The genome and transcriptomes of the anti-tumor agent Clostridium novyi-NT.</title>
        <authorList>
            <person name="Bettegowda C."/>
            <person name="Huang X."/>
            <person name="Lin J."/>
            <person name="Cheong I."/>
            <person name="Kohli M."/>
            <person name="Szabo S.A."/>
            <person name="Zhang X."/>
            <person name="Diaz L.A. Jr."/>
            <person name="Velculescu V.E."/>
            <person name="Parmigiani G."/>
            <person name="Kinzler K.W."/>
            <person name="Vogelstein B."/>
            <person name="Zhou S."/>
        </authorList>
    </citation>
    <scope>NUCLEOTIDE SEQUENCE [LARGE SCALE GENOMIC DNA]</scope>
    <source>
        <strain>NT</strain>
    </source>
</reference>
<evidence type="ECO:0000255" key="1">
    <source>
        <dbReference type="HAMAP-Rule" id="MF_01588"/>
    </source>
</evidence>
<keyword id="KW-0227">DNA damage</keyword>
<keyword id="KW-0234">DNA repair</keyword>
<keyword id="KW-0235">DNA replication</keyword>
<keyword id="KW-0436">Ligase</keyword>
<keyword id="KW-0460">Magnesium</keyword>
<keyword id="KW-0464">Manganese</keyword>
<keyword id="KW-0479">Metal-binding</keyword>
<keyword id="KW-0520">NAD</keyword>
<keyword id="KW-1185">Reference proteome</keyword>
<keyword id="KW-0862">Zinc</keyword>
<comment type="function">
    <text evidence="1">DNA ligase that catalyzes the formation of phosphodiester linkages between 5'-phosphoryl and 3'-hydroxyl groups in double-stranded DNA using NAD as a coenzyme and as the energy source for the reaction. It is essential for DNA replication and repair of damaged DNA.</text>
</comment>
<comment type="catalytic activity">
    <reaction evidence="1">
        <text>NAD(+) + (deoxyribonucleotide)n-3'-hydroxyl + 5'-phospho-(deoxyribonucleotide)m = (deoxyribonucleotide)n+m + AMP + beta-nicotinamide D-nucleotide.</text>
        <dbReference type="EC" id="6.5.1.2"/>
    </reaction>
</comment>
<comment type="cofactor">
    <cofactor evidence="1">
        <name>Mg(2+)</name>
        <dbReference type="ChEBI" id="CHEBI:18420"/>
    </cofactor>
    <cofactor evidence="1">
        <name>Mn(2+)</name>
        <dbReference type="ChEBI" id="CHEBI:29035"/>
    </cofactor>
</comment>
<comment type="similarity">
    <text evidence="1">Belongs to the NAD-dependent DNA ligase family. LigA subfamily.</text>
</comment>
<organism>
    <name type="scientific">Clostridium novyi (strain NT)</name>
    <dbReference type="NCBI Taxonomy" id="386415"/>
    <lineage>
        <taxon>Bacteria</taxon>
        <taxon>Bacillati</taxon>
        <taxon>Bacillota</taxon>
        <taxon>Clostridia</taxon>
        <taxon>Eubacteriales</taxon>
        <taxon>Clostridiaceae</taxon>
        <taxon>Clostridium</taxon>
    </lineage>
</organism>
<accession>A0Q2Q3</accession>
<proteinExistence type="inferred from homology"/>
<gene>
    <name evidence="1" type="primary">ligA</name>
    <name type="ordered locus">NT01CX_0434</name>
</gene>
<feature type="chain" id="PRO_0000313198" description="DNA ligase">
    <location>
        <begin position="1"/>
        <end position="664"/>
    </location>
</feature>
<feature type="domain" description="BRCT" evidence="1">
    <location>
        <begin position="587"/>
        <end position="664"/>
    </location>
</feature>
<feature type="active site" description="N6-AMP-lysine intermediate" evidence="1">
    <location>
        <position position="122"/>
    </location>
</feature>
<feature type="binding site" evidence="1">
    <location>
        <begin position="32"/>
        <end position="36"/>
    </location>
    <ligand>
        <name>NAD(+)</name>
        <dbReference type="ChEBI" id="CHEBI:57540"/>
    </ligand>
</feature>
<feature type="binding site" evidence="1">
    <location>
        <begin position="80"/>
        <end position="81"/>
    </location>
    <ligand>
        <name>NAD(+)</name>
        <dbReference type="ChEBI" id="CHEBI:57540"/>
    </ligand>
</feature>
<feature type="binding site" evidence="1">
    <location>
        <position position="144"/>
    </location>
    <ligand>
        <name>NAD(+)</name>
        <dbReference type="ChEBI" id="CHEBI:57540"/>
    </ligand>
</feature>
<feature type="binding site" evidence="1">
    <location>
        <position position="178"/>
    </location>
    <ligand>
        <name>NAD(+)</name>
        <dbReference type="ChEBI" id="CHEBI:57540"/>
    </ligand>
</feature>
<feature type="binding site" evidence="1">
    <location>
        <position position="314"/>
    </location>
    <ligand>
        <name>NAD(+)</name>
        <dbReference type="ChEBI" id="CHEBI:57540"/>
    </ligand>
</feature>
<feature type="binding site" evidence="1">
    <location>
        <position position="407"/>
    </location>
    <ligand>
        <name>Zn(2+)</name>
        <dbReference type="ChEBI" id="CHEBI:29105"/>
    </ligand>
</feature>
<feature type="binding site" evidence="1">
    <location>
        <position position="410"/>
    </location>
    <ligand>
        <name>Zn(2+)</name>
        <dbReference type="ChEBI" id="CHEBI:29105"/>
    </ligand>
</feature>
<feature type="binding site" evidence="1">
    <location>
        <position position="423"/>
    </location>
    <ligand>
        <name>Zn(2+)</name>
        <dbReference type="ChEBI" id="CHEBI:29105"/>
    </ligand>
</feature>
<feature type="binding site" evidence="1">
    <location>
        <position position="429"/>
    </location>
    <ligand>
        <name>Zn(2+)</name>
        <dbReference type="ChEBI" id="CHEBI:29105"/>
    </ligand>
</feature>
<dbReference type="EC" id="6.5.1.2" evidence="1"/>
<dbReference type="EMBL" id="CP000382">
    <property type="protein sequence ID" value="ABK62450.1"/>
    <property type="molecule type" value="Genomic_DNA"/>
</dbReference>
<dbReference type="RefSeq" id="WP_011722889.1">
    <property type="nucleotide sequence ID" value="NC_008593.1"/>
</dbReference>
<dbReference type="SMR" id="A0Q2Q3"/>
<dbReference type="STRING" id="386415.NT01CX_0434"/>
<dbReference type="KEGG" id="cno:NT01CX_0434"/>
<dbReference type="PATRIC" id="fig|386415.7.peg.1939"/>
<dbReference type="eggNOG" id="COG0272">
    <property type="taxonomic scope" value="Bacteria"/>
</dbReference>
<dbReference type="HOGENOM" id="CLU_007764_2_1_9"/>
<dbReference type="Proteomes" id="UP000008220">
    <property type="component" value="Chromosome"/>
</dbReference>
<dbReference type="GO" id="GO:0005829">
    <property type="term" value="C:cytosol"/>
    <property type="evidence" value="ECO:0007669"/>
    <property type="project" value="TreeGrafter"/>
</dbReference>
<dbReference type="GO" id="GO:0003677">
    <property type="term" value="F:DNA binding"/>
    <property type="evidence" value="ECO:0007669"/>
    <property type="project" value="InterPro"/>
</dbReference>
<dbReference type="GO" id="GO:0003911">
    <property type="term" value="F:DNA ligase (NAD+) activity"/>
    <property type="evidence" value="ECO:0007669"/>
    <property type="project" value="UniProtKB-UniRule"/>
</dbReference>
<dbReference type="GO" id="GO:0046872">
    <property type="term" value="F:metal ion binding"/>
    <property type="evidence" value="ECO:0007669"/>
    <property type="project" value="UniProtKB-KW"/>
</dbReference>
<dbReference type="GO" id="GO:0006281">
    <property type="term" value="P:DNA repair"/>
    <property type="evidence" value="ECO:0007669"/>
    <property type="project" value="UniProtKB-KW"/>
</dbReference>
<dbReference type="GO" id="GO:0006260">
    <property type="term" value="P:DNA replication"/>
    <property type="evidence" value="ECO:0007669"/>
    <property type="project" value="UniProtKB-KW"/>
</dbReference>
<dbReference type="CDD" id="cd17748">
    <property type="entry name" value="BRCT_DNA_ligase_like"/>
    <property type="match status" value="1"/>
</dbReference>
<dbReference type="CDD" id="cd00114">
    <property type="entry name" value="LIGANc"/>
    <property type="match status" value="1"/>
</dbReference>
<dbReference type="FunFam" id="1.10.150.20:FF:000006">
    <property type="entry name" value="DNA ligase"/>
    <property type="match status" value="1"/>
</dbReference>
<dbReference type="FunFam" id="1.10.150.20:FF:000007">
    <property type="entry name" value="DNA ligase"/>
    <property type="match status" value="1"/>
</dbReference>
<dbReference type="FunFam" id="2.40.50.140:FF:000012">
    <property type="entry name" value="DNA ligase"/>
    <property type="match status" value="1"/>
</dbReference>
<dbReference type="FunFam" id="3.40.50.10190:FF:000054">
    <property type="entry name" value="DNA ligase"/>
    <property type="match status" value="1"/>
</dbReference>
<dbReference type="Gene3D" id="1.10.150.20">
    <property type="entry name" value="5' to 3' exonuclease, C-terminal subdomain"/>
    <property type="match status" value="2"/>
</dbReference>
<dbReference type="Gene3D" id="3.40.50.10190">
    <property type="entry name" value="BRCT domain"/>
    <property type="match status" value="1"/>
</dbReference>
<dbReference type="Gene3D" id="3.30.470.30">
    <property type="entry name" value="DNA ligase/mRNA capping enzyme"/>
    <property type="match status" value="1"/>
</dbReference>
<dbReference type="Gene3D" id="1.10.287.610">
    <property type="entry name" value="Helix hairpin bin"/>
    <property type="match status" value="1"/>
</dbReference>
<dbReference type="Gene3D" id="2.40.50.140">
    <property type="entry name" value="Nucleic acid-binding proteins"/>
    <property type="match status" value="1"/>
</dbReference>
<dbReference type="HAMAP" id="MF_01588">
    <property type="entry name" value="DNA_ligase_A"/>
    <property type="match status" value="1"/>
</dbReference>
<dbReference type="InterPro" id="IPR001357">
    <property type="entry name" value="BRCT_dom"/>
</dbReference>
<dbReference type="InterPro" id="IPR036420">
    <property type="entry name" value="BRCT_dom_sf"/>
</dbReference>
<dbReference type="InterPro" id="IPR041663">
    <property type="entry name" value="DisA/LigA_HHH"/>
</dbReference>
<dbReference type="InterPro" id="IPR001679">
    <property type="entry name" value="DNA_ligase"/>
</dbReference>
<dbReference type="InterPro" id="IPR033136">
    <property type="entry name" value="DNA_ligase_CS"/>
</dbReference>
<dbReference type="InterPro" id="IPR013839">
    <property type="entry name" value="DNAligase_adenylation"/>
</dbReference>
<dbReference type="InterPro" id="IPR013840">
    <property type="entry name" value="DNAligase_N"/>
</dbReference>
<dbReference type="InterPro" id="IPR003583">
    <property type="entry name" value="Hlx-hairpin-Hlx_DNA-bd_motif"/>
</dbReference>
<dbReference type="InterPro" id="IPR012340">
    <property type="entry name" value="NA-bd_OB-fold"/>
</dbReference>
<dbReference type="InterPro" id="IPR004150">
    <property type="entry name" value="NAD_DNA_ligase_OB"/>
</dbReference>
<dbReference type="InterPro" id="IPR010994">
    <property type="entry name" value="RuvA_2-like"/>
</dbReference>
<dbReference type="NCBIfam" id="TIGR00575">
    <property type="entry name" value="dnlj"/>
    <property type="match status" value="1"/>
</dbReference>
<dbReference type="NCBIfam" id="NF005932">
    <property type="entry name" value="PRK07956.1"/>
    <property type="match status" value="1"/>
</dbReference>
<dbReference type="PANTHER" id="PTHR23389">
    <property type="entry name" value="CHROMOSOME TRANSMISSION FIDELITY FACTOR 18"/>
    <property type="match status" value="1"/>
</dbReference>
<dbReference type="PANTHER" id="PTHR23389:SF9">
    <property type="entry name" value="DNA LIGASE"/>
    <property type="match status" value="1"/>
</dbReference>
<dbReference type="Pfam" id="PF00533">
    <property type="entry name" value="BRCT"/>
    <property type="match status" value="1"/>
</dbReference>
<dbReference type="Pfam" id="PF01653">
    <property type="entry name" value="DNA_ligase_aden"/>
    <property type="match status" value="1"/>
</dbReference>
<dbReference type="Pfam" id="PF03120">
    <property type="entry name" value="DNA_ligase_OB"/>
    <property type="match status" value="1"/>
</dbReference>
<dbReference type="Pfam" id="PF12826">
    <property type="entry name" value="HHH_2"/>
    <property type="match status" value="1"/>
</dbReference>
<dbReference type="Pfam" id="PF14520">
    <property type="entry name" value="HHH_5"/>
    <property type="match status" value="1"/>
</dbReference>
<dbReference type="PIRSF" id="PIRSF001604">
    <property type="entry name" value="LigA"/>
    <property type="match status" value="1"/>
</dbReference>
<dbReference type="SMART" id="SM00292">
    <property type="entry name" value="BRCT"/>
    <property type="match status" value="1"/>
</dbReference>
<dbReference type="SMART" id="SM00278">
    <property type="entry name" value="HhH1"/>
    <property type="match status" value="3"/>
</dbReference>
<dbReference type="SMART" id="SM00532">
    <property type="entry name" value="LIGANc"/>
    <property type="match status" value="1"/>
</dbReference>
<dbReference type="SUPFAM" id="SSF52113">
    <property type="entry name" value="BRCT domain"/>
    <property type="match status" value="1"/>
</dbReference>
<dbReference type="SUPFAM" id="SSF56091">
    <property type="entry name" value="DNA ligase/mRNA capping enzyme, catalytic domain"/>
    <property type="match status" value="1"/>
</dbReference>
<dbReference type="SUPFAM" id="SSF50249">
    <property type="entry name" value="Nucleic acid-binding proteins"/>
    <property type="match status" value="1"/>
</dbReference>
<dbReference type="SUPFAM" id="SSF47781">
    <property type="entry name" value="RuvA domain 2-like"/>
    <property type="match status" value="1"/>
</dbReference>
<dbReference type="PROSITE" id="PS50172">
    <property type="entry name" value="BRCT"/>
    <property type="match status" value="1"/>
</dbReference>
<dbReference type="PROSITE" id="PS01056">
    <property type="entry name" value="DNA_LIGASE_N2"/>
    <property type="match status" value="1"/>
</dbReference>
<protein>
    <recommendedName>
        <fullName evidence="1">DNA ligase</fullName>
        <ecNumber evidence="1">6.5.1.2</ecNumber>
    </recommendedName>
    <alternativeName>
        <fullName evidence="1">Polydeoxyribonucleotide synthase [NAD(+)]</fullName>
    </alternativeName>
</protein>